<keyword id="KW-0456">Lyase</keyword>
<keyword id="KW-1185">Reference proteome</keyword>
<feature type="chain" id="PRO_0000360626" description="Uncharacterized sugar epimerase YhfK">
    <location>
        <begin position="1"/>
        <end position="214"/>
    </location>
</feature>
<feature type="active site" description="Proton acceptor" evidence="1">
    <location>
        <position position="129"/>
    </location>
</feature>
<accession>O07609</accession>
<accession>Q796U0</accession>
<proteinExistence type="evidence at transcript level"/>
<evidence type="ECO:0000250" key="1"/>
<evidence type="ECO:0000269" key="2">
    <source>
    </source>
</evidence>
<evidence type="ECO:0000305" key="3"/>
<organism>
    <name type="scientific">Bacillus subtilis (strain 168)</name>
    <dbReference type="NCBI Taxonomy" id="224308"/>
    <lineage>
        <taxon>Bacteria</taxon>
        <taxon>Bacillati</taxon>
        <taxon>Bacillota</taxon>
        <taxon>Bacilli</taxon>
        <taxon>Bacillales</taxon>
        <taxon>Bacillaceae</taxon>
        <taxon>Bacillus</taxon>
    </lineage>
</organism>
<dbReference type="EC" id="4.-.-.-"/>
<dbReference type="EMBL" id="Y14083">
    <property type="protein sequence ID" value="CAA74532.1"/>
    <property type="molecule type" value="Genomic_DNA"/>
</dbReference>
<dbReference type="EMBL" id="AL009126">
    <property type="protein sequence ID" value="CAB12866.1"/>
    <property type="molecule type" value="Genomic_DNA"/>
</dbReference>
<dbReference type="PIR" id="H69830">
    <property type="entry name" value="H69830"/>
</dbReference>
<dbReference type="RefSeq" id="NP_388907.1">
    <property type="nucleotide sequence ID" value="NC_000964.3"/>
</dbReference>
<dbReference type="RefSeq" id="WP_003245344.1">
    <property type="nucleotide sequence ID" value="NZ_OZ025638.1"/>
</dbReference>
<dbReference type="SMR" id="O07609"/>
<dbReference type="FunCoup" id="O07609">
    <property type="interactions" value="438"/>
</dbReference>
<dbReference type="STRING" id="224308.BSU10260"/>
<dbReference type="PaxDb" id="224308-BSU10260"/>
<dbReference type="DNASU" id="936309"/>
<dbReference type="EnsemblBacteria" id="CAB12866">
    <property type="protein sequence ID" value="CAB12866"/>
    <property type="gene ID" value="BSU_10260"/>
</dbReference>
<dbReference type="GeneID" id="936309"/>
<dbReference type="KEGG" id="bsu:BSU10260"/>
<dbReference type="PATRIC" id="fig|224308.179.peg.1102"/>
<dbReference type="eggNOG" id="COG0702">
    <property type="taxonomic scope" value="Bacteria"/>
</dbReference>
<dbReference type="InParanoid" id="O07609"/>
<dbReference type="OrthoDB" id="9803892at2"/>
<dbReference type="PhylomeDB" id="O07609"/>
<dbReference type="BioCyc" id="BSUB:BSU10260-MONOMER"/>
<dbReference type="Proteomes" id="UP000001570">
    <property type="component" value="Chromosome"/>
</dbReference>
<dbReference type="GO" id="GO:0016829">
    <property type="term" value="F:lyase activity"/>
    <property type="evidence" value="ECO:0007669"/>
    <property type="project" value="UniProtKB-KW"/>
</dbReference>
<dbReference type="CDD" id="cd05243">
    <property type="entry name" value="SDR_a5"/>
    <property type="match status" value="1"/>
</dbReference>
<dbReference type="Gene3D" id="3.40.50.720">
    <property type="entry name" value="NAD(P)-binding Rossmann-like Domain"/>
    <property type="match status" value="1"/>
</dbReference>
<dbReference type="InterPro" id="IPR016040">
    <property type="entry name" value="NAD(P)-bd_dom"/>
</dbReference>
<dbReference type="InterPro" id="IPR036291">
    <property type="entry name" value="NAD(P)-bd_dom_sf"/>
</dbReference>
<dbReference type="PANTHER" id="PTHR15020">
    <property type="entry name" value="FLAVIN REDUCTASE-RELATED"/>
    <property type="match status" value="1"/>
</dbReference>
<dbReference type="PANTHER" id="PTHR15020:SF50">
    <property type="entry name" value="UPF0659 PROTEIN YMR090W"/>
    <property type="match status" value="1"/>
</dbReference>
<dbReference type="Pfam" id="PF13460">
    <property type="entry name" value="NAD_binding_10"/>
    <property type="match status" value="1"/>
</dbReference>
<dbReference type="SUPFAM" id="SSF51735">
    <property type="entry name" value="NAD(P)-binding Rossmann-fold domains"/>
    <property type="match status" value="1"/>
</dbReference>
<comment type="induction">
    <text evidence="2">By high salinity.</text>
</comment>
<comment type="similarity">
    <text evidence="3">Belongs to the NAD(P)-dependent epimerase/dehydratase family.</text>
</comment>
<name>YHFK_BACSU</name>
<reference key="1">
    <citation type="submission" date="1997-06" db="EMBL/GenBank/DDBJ databases">
        <authorList>
            <person name="Noback M.A."/>
            <person name="Terpstra P."/>
            <person name="Holsappel S."/>
            <person name="Venema G."/>
            <person name="Bron S."/>
        </authorList>
    </citation>
    <scope>NUCLEOTIDE SEQUENCE [GENOMIC DNA]</scope>
    <source>
        <strain>168</strain>
    </source>
</reference>
<reference key="2">
    <citation type="journal article" date="1997" name="Nature">
        <title>The complete genome sequence of the Gram-positive bacterium Bacillus subtilis.</title>
        <authorList>
            <person name="Kunst F."/>
            <person name="Ogasawara N."/>
            <person name="Moszer I."/>
            <person name="Albertini A.M."/>
            <person name="Alloni G."/>
            <person name="Azevedo V."/>
            <person name="Bertero M.G."/>
            <person name="Bessieres P."/>
            <person name="Bolotin A."/>
            <person name="Borchert S."/>
            <person name="Borriss R."/>
            <person name="Boursier L."/>
            <person name="Brans A."/>
            <person name="Braun M."/>
            <person name="Brignell S.C."/>
            <person name="Bron S."/>
            <person name="Brouillet S."/>
            <person name="Bruschi C.V."/>
            <person name="Caldwell B."/>
            <person name="Capuano V."/>
            <person name="Carter N.M."/>
            <person name="Choi S.-K."/>
            <person name="Codani J.-J."/>
            <person name="Connerton I.F."/>
            <person name="Cummings N.J."/>
            <person name="Daniel R.A."/>
            <person name="Denizot F."/>
            <person name="Devine K.M."/>
            <person name="Duesterhoeft A."/>
            <person name="Ehrlich S.D."/>
            <person name="Emmerson P.T."/>
            <person name="Entian K.-D."/>
            <person name="Errington J."/>
            <person name="Fabret C."/>
            <person name="Ferrari E."/>
            <person name="Foulger D."/>
            <person name="Fritz C."/>
            <person name="Fujita M."/>
            <person name="Fujita Y."/>
            <person name="Fuma S."/>
            <person name="Galizzi A."/>
            <person name="Galleron N."/>
            <person name="Ghim S.-Y."/>
            <person name="Glaser P."/>
            <person name="Goffeau A."/>
            <person name="Golightly E.J."/>
            <person name="Grandi G."/>
            <person name="Guiseppi G."/>
            <person name="Guy B.J."/>
            <person name="Haga K."/>
            <person name="Haiech J."/>
            <person name="Harwood C.R."/>
            <person name="Henaut A."/>
            <person name="Hilbert H."/>
            <person name="Holsappel S."/>
            <person name="Hosono S."/>
            <person name="Hullo M.-F."/>
            <person name="Itaya M."/>
            <person name="Jones L.-M."/>
            <person name="Joris B."/>
            <person name="Karamata D."/>
            <person name="Kasahara Y."/>
            <person name="Klaerr-Blanchard M."/>
            <person name="Klein C."/>
            <person name="Kobayashi Y."/>
            <person name="Koetter P."/>
            <person name="Koningstein G."/>
            <person name="Krogh S."/>
            <person name="Kumano M."/>
            <person name="Kurita K."/>
            <person name="Lapidus A."/>
            <person name="Lardinois S."/>
            <person name="Lauber J."/>
            <person name="Lazarevic V."/>
            <person name="Lee S.-M."/>
            <person name="Levine A."/>
            <person name="Liu H."/>
            <person name="Masuda S."/>
            <person name="Mauel C."/>
            <person name="Medigue C."/>
            <person name="Medina N."/>
            <person name="Mellado R.P."/>
            <person name="Mizuno M."/>
            <person name="Moestl D."/>
            <person name="Nakai S."/>
            <person name="Noback M."/>
            <person name="Noone D."/>
            <person name="O'Reilly M."/>
            <person name="Ogawa K."/>
            <person name="Ogiwara A."/>
            <person name="Oudega B."/>
            <person name="Park S.-H."/>
            <person name="Parro V."/>
            <person name="Pohl T.M."/>
            <person name="Portetelle D."/>
            <person name="Porwollik S."/>
            <person name="Prescott A.M."/>
            <person name="Presecan E."/>
            <person name="Pujic P."/>
            <person name="Purnelle B."/>
            <person name="Rapoport G."/>
            <person name="Rey M."/>
            <person name="Reynolds S."/>
            <person name="Rieger M."/>
            <person name="Rivolta C."/>
            <person name="Rocha E."/>
            <person name="Roche B."/>
            <person name="Rose M."/>
            <person name="Sadaie Y."/>
            <person name="Sato T."/>
            <person name="Scanlan E."/>
            <person name="Schleich S."/>
            <person name="Schroeter R."/>
            <person name="Scoffone F."/>
            <person name="Sekiguchi J."/>
            <person name="Sekowska A."/>
            <person name="Seror S.J."/>
            <person name="Serror P."/>
            <person name="Shin B.-S."/>
            <person name="Soldo B."/>
            <person name="Sorokin A."/>
            <person name="Tacconi E."/>
            <person name="Takagi T."/>
            <person name="Takahashi H."/>
            <person name="Takemaru K."/>
            <person name="Takeuchi M."/>
            <person name="Tamakoshi A."/>
            <person name="Tanaka T."/>
            <person name="Terpstra P."/>
            <person name="Tognoni A."/>
            <person name="Tosato V."/>
            <person name="Uchiyama S."/>
            <person name="Vandenbol M."/>
            <person name="Vannier F."/>
            <person name="Vassarotti A."/>
            <person name="Viari A."/>
            <person name="Wambutt R."/>
            <person name="Wedler E."/>
            <person name="Wedler H."/>
            <person name="Weitzenegger T."/>
            <person name="Winters P."/>
            <person name="Wipat A."/>
            <person name="Yamamoto H."/>
            <person name="Yamane K."/>
            <person name="Yasumoto K."/>
            <person name="Yata K."/>
            <person name="Yoshida K."/>
            <person name="Yoshikawa H.-F."/>
            <person name="Zumstein E."/>
            <person name="Yoshikawa H."/>
            <person name="Danchin A."/>
        </authorList>
    </citation>
    <scope>NUCLEOTIDE SEQUENCE [LARGE SCALE GENOMIC DNA]</scope>
    <source>
        <strain>168</strain>
    </source>
</reference>
<reference key="3">
    <citation type="journal article" date="2002" name="J. Bacteriol.">
        <title>High-salinity-induced iron limitation in Bacillus subtilis.</title>
        <authorList>
            <person name="Hoffmann T."/>
            <person name="Schuetz A."/>
            <person name="Brosius M."/>
            <person name="Voelker A."/>
            <person name="Voelker U."/>
            <person name="Bremer E."/>
        </authorList>
    </citation>
    <scope>INDUCTION</scope>
    <source>
        <strain>168 / JH642</strain>
    </source>
</reference>
<sequence>MKVFLIGANGQIGQRLVSLFQDNPDHSIRAMVRKEEQKASLEAAGAEAVLANLEGSPEEIAAAAKGCDAIIFTAGSGGSTGYDKTLLVDLDGAAKAIEAAAIAGIKRFIMVSALQAHNRENWNEALKPYYVAKHYADKILEASGLTYTIIRPGGLRNEPGTGTVSAAKDLERGFISRDDVAKTVIASLDEKNTENRAFDLTEGDTPIAEALKKL</sequence>
<protein>
    <recommendedName>
        <fullName>Uncharacterized sugar epimerase YhfK</fullName>
        <ecNumber>4.-.-.-</ecNumber>
    </recommendedName>
</protein>
<gene>
    <name type="primary">yhfK</name>
    <name type="ordered locus">BSU10260</name>
</gene>